<reference key="1">
    <citation type="journal article" date="1990" name="J. Biol. Chem.">
        <title>Molecular cloning and amino acid sequence of peptide-N4-(N-acetyl-beta-D-glucosaminyl)asparagine amidase from flavobacterium meningosepticum.</title>
        <authorList>
            <person name="Tarentino A.L."/>
            <person name="Quinones G."/>
            <person name="Trumble A."/>
            <person name="Changchien L.-M."/>
            <person name="Duceman B."/>
            <person name="Maley F."/>
            <person name="Plummer T.H. Jr."/>
        </authorList>
    </citation>
    <scope>NUCLEOTIDE SEQUENCE [GENOMIC DNA]</scope>
    <scope>PARTIAL PROTEIN SEQUENCE</scope>
</reference>
<reference key="2">
    <citation type="journal article" date="1990" name="J. Biol. Chem.">
        <title>Cloning and expression of peptide-N4-(N-acetyl-beta-D-glucosaminyl)asparagine amidase F in Escherichia coli.</title>
        <authorList>
            <person name="Barsomian G.D."/>
            <person name="Johnson T.L."/>
            <person name="Borowski M."/>
            <person name="Denman J."/>
            <person name="Ollington J.F."/>
            <person name="Hirani S."/>
            <person name="McNeilly D.S."/>
            <person name="Rasmussen J.R."/>
        </authorList>
    </citation>
    <scope>NUCLEOTIDE SEQUENCE [GENOMIC DNA]</scope>
    <scope>PROTEIN SEQUENCE OF 41-61</scope>
    <source>
        <strain>ATCC 33958</strain>
    </source>
</reference>
<reference key="3">
    <citation type="journal article" date="1990" name="J. Biol. Chem.">
        <title>Molecular cloning and heterologous expression of N-glycosidase F from Flavobacterium meningosepticum.</title>
        <authorList>
            <person name="Lemp D."/>
            <person name="Haselbeck A."/>
            <person name="Klebl F."/>
        </authorList>
    </citation>
    <scope>NUCLEOTIDE SEQUENCE [GENOMIC DNA]</scope>
</reference>
<reference key="4">
    <citation type="journal article" date="1994" name="Biochemistry">
        <title>Crystal structure of peptide-N4-(N-acetyl-beta-D-glucosaminyl)asparagine amidase F at 2.2-A resolution.</title>
        <authorList>
            <person name="Kuhn P."/>
            <person name="Tarantino A.L."/>
            <person name="Plummer T.H. Jr."/>
            <person name="van Roey P."/>
        </authorList>
    </citation>
    <scope>X-RAY CRYSTALLOGRAPHY (2.2 ANGSTROMS)</scope>
</reference>
<reference key="5">
    <citation type="journal article" date="1994" name="Structure">
        <title>The three-dimensional structure of PNGase F, a glycosylasparaginase from Flavobacterium meningosepticum.</title>
        <authorList>
            <person name="Norris G.E."/>
            <person name="Stillman T.J."/>
            <person name="Anderson B.F."/>
            <person name="Baker E.N."/>
        </authorList>
    </citation>
    <scope>X-RAY CRYSTALLOGRAPHY (1.8 ANGSTROMS)</scope>
</reference>
<reference key="6">
    <citation type="journal article" date="1995" name="J. Biol. Chem.">
        <title>Active site and oligosaccharide recognition residues of peptide-N4-(N-acetyl-beta-D-glucosaminyl)asparagine amidase F.</title>
        <authorList>
            <person name="Kuhn P."/>
            <person name="Guan C."/>
            <person name="Cui T."/>
            <person name="Tarentino A.L."/>
            <person name="Plummer T.H. Jr."/>
            <person name="van Roey P."/>
        </authorList>
    </citation>
    <scope>X-RAY CRYSTALLOGRAPHY (2.0 ANGSTROMS)</scope>
    <scope>MUTAGENESIS</scope>
</reference>
<accession>P21163</accession>
<feature type="signal peptide" evidence="1">
    <location>
        <begin position="1"/>
        <end position="40"/>
    </location>
</feature>
<feature type="chain" id="PRO_0000022079" description="Peptide-N(4)-(N-acetyl-beta-D-glucosaminyl)asparagine amidase F">
    <location>
        <begin position="41"/>
        <end position="354"/>
    </location>
</feature>
<feature type="active site">
    <location>
        <position position="100"/>
    </location>
</feature>
<feature type="active site">
    <location>
        <position position="158"/>
    </location>
</feature>
<feature type="active site">
    <location>
        <position position="246"/>
    </location>
</feature>
<feature type="disulfide bond" evidence="3">
    <location>
        <begin position="91"/>
        <end position="96"/>
    </location>
</feature>
<feature type="disulfide bond" evidence="3">
    <location>
        <begin position="244"/>
        <end position="248"/>
    </location>
</feature>
<feature type="disulfide bond" evidence="3">
    <location>
        <begin position="271"/>
        <end position="292"/>
    </location>
</feature>
<feature type="mutagenesis site" description="Complete loss of activity." evidence="2">
    <original>D</original>
    <variation>N</variation>
    <location>
        <position position="100"/>
    </location>
</feature>
<feature type="mutagenesis site" description="Loss of activity." evidence="2">
    <original>E</original>
    <variation>Q</variation>
    <location>
        <position position="158"/>
    </location>
</feature>
<feature type="mutagenesis site" description="Loss of activity." evidence="2">
    <original>E</original>
    <variation>Q</variation>
    <location>
        <position position="246"/>
    </location>
</feature>
<feature type="sequence conflict" description="In Ref. 1; AAA85323." evidence="4" ref="1">
    <original>R</original>
    <variation>G</variation>
    <location>
        <position position="33"/>
    </location>
</feature>
<feature type="sequence conflict" description="In Ref. 2; AAA24932." evidence="4" ref="2">
    <original>W</original>
    <variation>C</variation>
    <location>
        <position position="160"/>
    </location>
</feature>
<feature type="sequence conflict" description="In Ref. 1; AAA85323." evidence="4" ref="1">
    <original>N</original>
    <variation>I</variation>
    <location>
        <position position="283"/>
    </location>
</feature>
<feature type="strand" evidence="5">
    <location>
        <begin position="46"/>
        <end position="50"/>
    </location>
</feature>
<feature type="strand" evidence="5">
    <location>
        <begin position="54"/>
        <end position="57"/>
    </location>
</feature>
<feature type="strand" evidence="5">
    <location>
        <begin position="60"/>
        <end position="62"/>
    </location>
</feature>
<feature type="strand" evidence="5">
    <location>
        <begin position="65"/>
        <end position="73"/>
    </location>
</feature>
<feature type="strand" evidence="5">
    <location>
        <begin position="80"/>
        <end position="89"/>
    </location>
</feature>
<feature type="helix" evidence="5">
    <location>
        <begin position="92"/>
        <end position="94"/>
    </location>
</feature>
<feature type="strand" evidence="5">
    <location>
        <begin position="102"/>
        <end position="108"/>
    </location>
</feature>
<feature type="turn" evidence="5">
    <location>
        <begin position="110"/>
        <end position="112"/>
    </location>
</feature>
<feature type="strand" evidence="5">
    <location>
        <begin position="115"/>
        <end position="122"/>
    </location>
</feature>
<feature type="strand" evidence="5">
    <location>
        <begin position="125"/>
        <end position="127"/>
    </location>
</feature>
<feature type="strand" evidence="5">
    <location>
        <begin position="132"/>
        <end position="134"/>
    </location>
</feature>
<feature type="strand" evidence="5">
    <location>
        <begin position="136"/>
        <end position="139"/>
    </location>
</feature>
<feature type="helix" evidence="5">
    <location>
        <begin position="141"/>
        <end position="143"/>
    </location>
</feature>
<feature type="turn" evidence="5">
    <location>
        <begin position="144"/>
        <end position="146"/>
    </location>
</feature>
<feature type="strand" evidence="5">
    <location>
        <begin position="147"/>
        <end position="157"/>
    </location>
</feature>
<feature type="strand" evidence="5">
    <location>
        <begin position="165"/>
        <end position="176"/>
    </location>
</feature>
<feature type="strand" evidence="5">
    <location>
        <begin position="181"/>
        <end position="191"/>
    </location>
</feature>
<feature type="helix" evidence="5">
    <location>
        <begin position="195"/>
        <end position="197"/>
    </location>
</feature>
<feature type="strand" evidence="5">
    <location>
        <begin position="198"/>
        <end position="203"/>
    </location>
</feature>
<feature type="strand" evidence="5">
    <location>
        <begin position="210"/>
        <end position="214"/>
    </location>
</feature>
<feature type="strand" evidence="5">
    <location>
        <begin position="220"/>
        <end position="231"/>
    </location>
</feature>
<feature type="strand" evidence="5">
    <location>
        <begin position="233"/>
        <end position="238"/>
    </location>
</feature>
<feature type="turn" evidence="5">
    <location>
        <begin position="239"/>
        <end position="241"/>
    </location>
</feature>
<feature type="strand" evidence="5">
    <location>
        <begin position="242"/>
        <end position="245"/>
    </location>
</feature>
<feature type="strand" evidence="5">
    <location>
        <begin position="250"/>
        <end position="256"/>
    </location>
</feature>
<feature type="strand" evidence="5">
    <location>
        <begin position="259"/>
        <end position="266"/>
    </location>
</feature>
<feature type="helix" evidence="5">
    <location>
        <begin position="271"/>
        <end position="273"/>
    </location>
</feature>
<feature type="strand" evidence="5">
    <location>
        <begin position="300"/>
        <end position="303"/>
    </location>
</feature>
<feature type="helix" evidence="5">
    <location>
        <begin position="306"/>
        <end position="308"/>
    </location>
</feature>
<feature type="strand" evidence="5">
    <location>
        <begin position="311"/>
        <end position="318"/>
    </location>
</feature>
<feature type="strand" evidence="5">
    <location>
        <begin position="326"/>
        <end position="328"/>
    </location>
</feature>
<feature type="strand" evidence="5">
    <location>
        <begin position="332"/>
        <end position="345"/>
    </location>
</feature>
<feature type="strand" evidence="5">
    <location>
        <begin position="351"/>
        <end position="353"/>
    </location>
</feature>
<organism>
    <name type="scientific">Elizabethkingia miricola</name>
    <name type="common">Chryseobacterium miricola</name>
    <dbReference type="NCBI Taxonomy" id="172045"/>
    <lineage>
        <taxon>Bacteria</taxon>
        <taxon>Pseudomonadati</taxon>
        <taxon>Bacteroidota</taxon>
        <taxon>Flavobacteriia</taxon>
        <taxon>Flavobacteriales</taxon>
        <taxon>Weeksellaceae</taxon>
        <taxon>Elizabethkingia</taxon>
    </lineage>
</organism>
<sequence length="354" mass="39032">MRKLLIFSISAYLMAGIVSCKGVDSATPVTEDRLALNAVNAPADNTVNIKTFDKVKNAFGDGLSQSAEGTFTFPADVTTVKTIKMFIKNECPNKTCDEWDRYANVYVKNKTTGEWYEIGRFITPYWVGTEKLPRGLEIDVTDFKSLLSGNTELKIYTETWLAKGREYSVDFDIVYGTPDYKYSAVVPVIQYNKSSIDGVPYGKAHTLGLKKNIQLPTNTEKAYLRTTISGWGHAKPYDAGSRGCAEWCFRTHTIAINNANTFQHQLGALGCSANPINNQSPGNWAPDRAGWCPGMAVPTRIDVLNNSLTGSTFSYEYKFQSWTNNGTNGDAFYAISSFVIAKSNTPISAPVVTN</sequence>
<comment type="function">
    <text>Cleaves an entire glycan from a glycoprotein. Requires that the glycosylated asparagine moiety (reaction 1) be substituted on its amino (R1) and carboxyl (R2) terminus with a polypeptide chain.</text>
</comment>
<comment type="catalytic activity">
    <reaction>
        <text>Hydrolysis of an N(4)-(acetyl-beta-D-glucosaminyl)asparagine residue in which the glucosamine residue may be further glycosylated, to yield a (substituted) N-acetyl-beta-D-glucosaminylamine and a peptide containing an aspartate residue.</text>
        <dbReference type="EC" id="3.5.1.52"/>
    </reaction>
</comment>
<comment type="subunit">
    <text>Monomer.</text>
</comment>
<comment type="biotechnology">
    <text>Widely used for the removal of N-glycans from glycoproteinss and glycopeptides in laboratory.</text>
</comment>
<comment type="miscellaneous">
    <text>PNGase F binds primarily to the polypeptide chain around the glycosamine junction including the inner di-N-acetylchitobiose core on the carbohydrate moiety.</text>
</comment>
<comment type="caution">
    <text evidence="4">Submitted as Flavobacterium meningosepticum ATCC 33958 by the authors and identified as Elizabethkingia miricola by ATCC Catalog.</text>
</comment>
<name>PNGF_ELIMR</name>
<proteinExistence type="evidence at protein level"/>
<evidence type="ECO:0000269" key="1">
    <source>
    </source>
</evidence>
<evidence type="ECO:0000269" key="2">
    <source>
    </source>
</evidence>
<evidence type="ECO:0000269" key="3">
    <source>
    </source>
</evidence>
<evidence type="ECO:0000305" key="4"/>
<evidence type="ECO:0007829" key="5">
    <source>
        <dbReference type="PDB" id="1PGS"/>
    </source>
</evidence>
<keyword id="KW-0002">3D-structure</keyword>
<keyword id="KW-0903">Direct protein sequencing</keyword>
<keyword id="KW-1015">Disulfide bond</keyword>
<keyword id="KW-0378">Hydrolase</keyword>
<keyword id="KW-0732">Signal</keyword>
<dbReference type="EC" id="3.5.1.52"/>
<dbReference type="EMBL" id="J05449">
    <property type="protein sequence ID" value="AAA85323.1"/>
    <property type="molecule type" value="mRNA"/>
</dbReference>
<dbReference type="EMBL" id="J05411">
    <property type="protein sequence ID" value="AAA24932.1"/>
    <property type="molecule type" value="Genomic_DNA"/>
</dbReference>
<dbReference type="EMBL" id="M57237">
    <property type="protein sequence ID" value="AAA24928.1"/>
    <property type="status" value="ALT_SEQ"/>
    <property type="molecule type" value="Genomic_DNA"/>
</dbReference>
<dbReference type="PIR" id="A38365">
    <property type="entry name" value="PNFMGF"/>
</dbReference>
<dbReference type="PDB" id="1PGS">
    <property type="method" value="X-ray"/>
    <property type="resolution" value="1.80 A"/>
    <property type="chains" value="A=41-354"/>
</dbReference>
<dbReference type="PDB" id="1PNF">
    <property type="method" value="X-ray"/>
    <property type="resolution" value="2.00 A"/>
    <property type="chains" value="A=41-354"/>
</dbReference>
<dbReference type="PDB" id="1PNG">
    <property type="method" value="X-ray"/>
    <property type="resolution" value="2.20 A"/>
    <property type="chains" value="A=41-354"/>
</dbReference>
<dbReference type="PDBsum" id="1PGS"/>
<dbReference type="PDBsum" id="1PNF"/>
<dbReference type="PDBsum" id="1PNG"/>
<dbReference type="SMR" id="P21163"/>
<dbReference type="IntAct" id="P21163">
    <property type="interactions" value="2"/>
</dbReference>
<dbReference type="eggNOG" id="ENOG502Z8FK">
    <property type="taxonomic scope" value="Bacteria"/>
</dbReference>
<dbReference type="EvolutionaryTrace" id="P21163"/>
<dbReference type="GO" id="GO:0016715">
    <property type="term" value="F:oxidoreductase activity, acting on paired donors, with incorporation or reduction of molecular oxygen, reduced ascorbate as one donor, and incorporation of one atom of oxygen"/>
    <property type="evidence" value="ECO:0007669"/>
    <property type="project" value="InterPro"/>
</dbReference>
<dbReference type="GO" id="GO:0000224">
    <property type="term" value="F:peptide-N4-(N-acetyl-beta-glucosaminyl)asparagine amidase activity"/>
    <property type="evidence" value="ECO:0007669"/>
    <property type="project" value="UniProtKB-EC"/>
</dbReference>
<dbReference type="Gene3D" id="2.60.120.230">
    <property type="match status" value="2"/>
</dbReference>
<dbReference type="InterPro" id="IPR014784">
    <property type="entry name" value="Cu2_ascorb_mOase-like_C"/>
</dbReference>
<dbReference type="InterPro" id="IPR053251">
    <property type="entry name" value="N-glycanase"/>
</dbReference>
<dbReference type="InterPro" id="IPR008977">
    <property type="entry name" value="PHM/PNGase_F_dom_sf"/>
</dbReference>
<dbReference type="InterPro" id="IPR015197">
    <property type="entry name" value="PngaseF_C"/>
</dbReference>
<dbReference type="PANTHER" id="PTHR39319">
    <property type="entry name" value="SI:DKEY-256H2.1"/>
    <property type="match status" value="1"/>
</dbReference>
<dbReference type="PANTHER" id="PTHR39319:SF1">
    <property type="entry name" value="SI:DKEY-256H2.1"/>
    <property type="match status" value="1"/>
</dbReference>
<dbReference type="Pfam" id="PF09113">
    <property type="entry name" value="N-glycanase_C"/>
    <property type="match status" value="1"/>
</dbReference>
<dbReference type="SUPFAM" id="SSF49742">
    <property type="entry name" value="PHM/PNGase F"/>
    <property type="match status" value="2"/>
</dbReference>
<gene>
    <name type="primary">ngl</name>
    <name type="synonym">png</name>
</gene>
<protein>
    <recommendedName>
        <fullName>Peptide-N(4)-(N-acetyl-beta-D-glucosaminyl)asparagine amidase F</fullName>
        <shortName>PNGase F</shortName>
        <ecNumber>3.5.1.52</ecNumber>
    </recommendedName>
    <alternativeName>
        <fullName>Glycopeptide N-glycosidase</fullName>
    </alternativeName>
    <alternativeName>
        <fullName>N-glycanase</fullName>
    </alternativeName>
</protein>